<feature type="chain" id="PRO_0000269293" description="Large ribosomal subunit protein bL21">
    <location>
        <begin position="1"/>
        <end position="103"/>
    </location>
</feature>
<protein>
    <recommendedName>
        <fullName evidence="1">Large ribosomal subunit protein bL21</fullName>
    </recommendedName>
    <alternativeName>
        <fullName evidence="2">50S ribosomal protein L21</fullName>
    </alternativeName>
</protein>
<organism>
    <name type="scientific">Burkholderia orbicola (strain AU 1054)</name>
    <dbReference type="NCBI Taxonomy" id="331271"/>
    <lineage>
        <taxon>Bacteria</taxon>
        <taxon>Pseudomonadati</taxon>
        <taxon>Pseudomonadota</taxon>
        <taxon>Betaproteobacteria</taxon>
        <taxon>Burkholderiales</taxon>
        <taxon>Burkholderiaceae</taxon>
        <taxon>Burkholderia</taxon>
        <taxon>Burkholderia cepacia complex</taxon>
        <taxon>Burkholderia orbicola</taxon>
    </lineage>
</organism>
<gene>
    <name evidence="1" type="primary">rplU</name>
    <name type="ordered locus">Bcen_0099</name>
</gene>
<comment type="function">
    <text evidence="1">This protein binds to 23S rRNA in the presence of protein L20.</text>
</comment>
<comment type="subunit">
    <text evidence="1">Part of the 50S ribosomal subunit. Contacts protein L20.</text>
</comment>
<comment type="similarity">
    <text evidence="1">Belongs to the bacterial ribosomal protein bL21 family.</text>
</comment>
<sequence length="103" mass="11356">MYAVIKTGGKQYKVAVGEKLKVEQIPADIDAEITLDQVLAVGEGESIKFGTPLVSGASVKATVVSHGRHAKVTIFKMRRRKHYQKHGGHRQNYTELRIDAINA</sequence>
<evidence type="ECO:0000255" key="1">
    <source>
        <dbReference type="HAMAP-Rule" id="MF_01363"/>
    </source>
</evidence>
<evidence type="ECO:0000305" key="2"/>
<reference key="1">
    <citation type="submission" date="2006-05" db="EMBL/GenBank/DDBJ databases">
        <title>Complete sequence of chromosome 1 of Burkholderia cenocepacia AU 1054.</title>
        <authorList>
            <consortium name="US DOE Joint Genome Institute"/>
            <person name="Copeland A."/>
            <person name="Lucas S."/>
            <person name="Lapidus A."/>
            <person name="Barry K."/>
            <person name="Detter J.C."/>
            <person name="Glavina del Rio T."/>
            <person name="Hammon N."/>
            <person name="Israni S."/>
            <person name="Dalin E."/>
            <person name="Tice H."/>
            <person name="Pitluck S."/>
            <person name="Chain P."/>
            <person name="Malfatti S."/>
            <person name="Shin M."/>
            <person name="Vergez L."/>
            <person name="Schmutz J."/>
            <person name="Larimer F."/>
            <person name="Land M."/>
            <person name="Hauser L."/>
            <person name="Kyrpides N."/>
            <person name="Lykidis A."/>
            <person name="LiPuma J.J."/>
            <person name="Konstantinidis K."/>
            <person name="Tiedje J.M."/>
            <person name="Richardson P."/>
        </authorList>
    </citation>
    <scope>NUCLEOTIDE SEQUENCE [LARGE SCALE GENOMIC DNA]</scope>
    <source>
        <strain>AU 1054</strain>
    </source>
</reference>
<name>RL21_BURO1</name>
<proteinExistence type="inferred from homology"/>
<accession>Q1BZE2</accession>
<dbReference type="EMBL" id="CP000378">
    <property type="protein sequence ID" value="ABF75013.1"/>
    <property type="molecule type" value="Genomic_DNA"/>
</dbReference>
<dbReference type="SMR" id="Q1BZE2"/>
<dbReference type="HOGENOM" id="CLU_061463_3_1_4"/>
<dbReference type="GO" id="GO:0005737">
    <property type="term" value="C:cytoplasm"/>
    <property type="evidence" value="ECO:0007669"/>
    <property type="project" value="UniProtKB-ARBA"/>
</dbReference>
<dbReference type="GO" id="GO:1990904">
    <property type="term" value="C:ribonucleoprotein complex"/>
    <property type="evidence" value="ECO:0007669"/>
    <property type="project" value="UniProtKB-KW"/>
</dbReference>
<dbReference type="GO" id="GO:0005840">
    <property type="term" value="C:ribosome"/>
    <property type="evidence" value="ECO:0007669"/>
    <property type="project" value="UniProtKB-KW"/>
</dbReference>
<dbReference type="GO" id="GO:0019843">
    <property type="term" value="F:rRNA binding"/>
    <property type="evidence" value="ECO:0007669"/>
    <property type="project" value="UniProtKB-UniRule"/>
</dbReference>
<dbReference type="GO" id="GO:0003735">
    <property type="term" value="F:structural constituent of ribosome"/>
    <property type="evidence" value="ECO:0007669"/>
    <property type="project" value="InterPro"/>
</dbReference>
<dbReference type="GO" id="GO:0006412">
    <property type="term" value="P:translation"/>
    <property type="evidence" value="ECO:0007669"/>
    <property type="project" value="UniProtKB-UniRule"/>
</dbReference>
<dbReference type="HAMAP" id="MF_01363">
    <property type="entry name" value="Ribosomal_bL21"/>
    <property type="match status" value="1"/>
</dbReference>
<dbReference type="InterPro" id="IPR028909">
    <property type="entry name" value="bL21-like"/>
</dbReference>
<dbReference type="InterPro" id="IPR036164">
    <property type="entry name" value="bL21-like_sf"/>
</dbReference>
<dbReference type="InterPro" id="IPR001787">
    <property type="entry name" value="Ribosomal_bL21"/>
</dbReference>
<dbReference type="InterPro" id="IPR018258">
    <property type="entry name" value="Ribosomal_bL21_CS"/>
</dbReference>
<dbReference type="NCBIfam" id="TIGR00061">
    <property type="entry name" value="L21"/>
    <property type="match status" value="1"/>
</dbReference>
<dbReference type="PANTHER" id="PTHR21349">
    <property type="entry name" value="50S RIBOSOMAL PROTEIN L21"/>
    <property type="match status" value="1"/>
</dbReference>
<dbReference type="PANTHER" id="PTHR21349:SF0">
    <property type="entry name" value="LARGE RIBOSOMAL SUBUNIT PROTEIN BL21M"/>
    <property type="match status" value="1"/>
</dbReference>
<dbReference type="Pfam" id="PF00829">
    <property type="entry name" value="Ribosomal_L21p"/>
    <property type="match status" value="1"/>
</dbReference>
<dbReference type="SUPFAM" id="SSF141091">
    <property type="entry name" value="L21p-like"/>
    <property type="match status" value="1"/>
</dbReference>
<dbReference type="PROSITE" id="PS01169">
    <property type="entry name" value="RIBOSOMAL_L21"/>
    <property type="match status" value="1"/>
</dbReference>
<keyword id="KW-0687">Ribonucleoprotein</keyword>
<keyword id="KW-0689">Ribosomal protein</keyword>
<keyword id="KW-0694">RNA-binding</keyword>
<keyword id="KW-0699">rRNA-binding</keyword>